<proteinExistence type="evidence at protein level"/>
<dbReference type="EMBL" id="AB473839">
    <property type="protein sequence ID" value="BAH10550.1"/>
    <property type="molecule type" value="mRNA"/>
</dbReference>
<dbReference type="EMBL" id="AC007654">
    <property type="protein sequence ID" value="AAF24588.1"/>
    <property type="molecule type" value="Genomic_DNA"/>
</dbReference>
<dbReference type="EMBL" id="CP002684">
    <property type="protein sequence ID" value="AEE31341.1"/>
    <property type="molecule type" value="Genomic_DNA"/>
</dbReference>
<dbReference type="EMBL" id="BT015067">
    <property type="protein sequence ID" value="AAT71939.1"/>
    <property type="molecule type" value="mRNA"/>
</dbReference>
<dbReference type="EMBL" id="BT015665">
    <property type="protein sequence ID" value="AAU15164.1"/>
    <property type="molecule type" value="mRNA"/>
</dbReference>
<dbReference type="PIR" id="B86439">
    <property type="entry name" value="B86439"/>
</dbReference>
<dbReference type="RefSeq" id="NP_174417.1">
    <property type="nucleotide sequence ID" value="NM_102870.3"/>
</dbReference>
<dbReference type="SMR" id="Q9SHE9"/>
<dbReference type="BioGRID" id="25255">
    <property type="interactions" value="11"/>
</dbReference>
<dbReference type="FunCoup" id="Q9SHE9">
    <property type="interactions" value="60"/>
</dbReference>
<dbReference type="IntAct" id="Q9SHE9">
    <property type="interactions" value="10"/>
</dbReference>
<dbReference type="STRING" id="3702.Q9SHE9"/>
<dbReference type="PaxDb" id="3702-AT1G31320.1"/>
<dbReference type="ProteomicsDB" id="238557"/>
<dbReference type="EnsemblPlants" id="AT1G31320.1">
    <property type="protein sequence ID" value="AT1G31320.1"/>
    <property type="gene ID" value="AT1G31320"/>
</dbReference>
<dbReference type="GeneID" id="840020"/>
<dbReference type="Gramene" id="AT1G31320.1">
    <property type="protein sequence ID" value="AT1G31320.1"/>
    <property type="gene ID" value="AT1G31320"/>
</dbReference>
<dbReference type="KEGG" id="ath:AT1G31320"/>
<dbReference type="Araport" id="AT1G31320"/>
<dbReference type="TAIR" id="AT1G31320">
    <property type="gene designation" value="LBD4"/>
</dbReference>
<dbReference type="eggNOG" id="ENOG502R4HI">
    <property type="taxonomic scope" value="Eukaryota"/>
</dbReference>
<dbReference type="HOGENOM" id="CLU_058353_5_2_1"/>
<dbReference type="InParanoid" id="Q9SHE9"/>
<dbReference type="OMA" id="FSHMDIV"/>
<dbReference type="OrthoDB" id="2020166at2759"/>
<dbReference type="PhylomeDB" id="Q9SHE9"/>
<dbReference type="PRO" id="PR:Q9SHE9"/>
<dbReference type="Proteomes" id="UP000006548">
    <property type="component" value="Chromosome 1"/>
</dbReference>
<dbReference type="ExpressionAtlas" id="Q9SHE9">
    <property type="expression patterns" value="baseline and differential"/>
</dbReference>
<dbReference type="GO" id="GO:0000976">
    <property type="term" value="F:transcription cis-regulatory region binding"/>
    <property type="evidence" value="ECO:0000353"/>
    <property type="project" value="TAIR"/>
</dbReference>
<dbReference type="GO" id="GO:0010087">
    <property type="term" value="P:phloem or xylem histogenesis"/>
    <property type="evidence" value="ECO:0000314"/>
    <property type="project" value="TAIR"/>
</dbReference>
<dbReference type="InterPro" id="IPR004883">
    <property type="entry name" value="LOB"/>
</dbReference>
<dbReference type="PANTHER" id="PTHR31301:SF167">
    <property type="entry name" value="LOB DOMAIN-CONTAINING PROTEIN 4"/>
    <property type="match status" value="1"/>
</dbReference>
<dbReference type="PANTHER" id="PTHR31301">
    <property type="entry name" value="LOB DOMAIN-CONTAINING PROTEIN 4-RELATED"/>
    <property type="match status" value="1"/>
</dbReference>
<dbReference type="Pfam" id="PF03195">
    <property type="entry name" value="LOB"/>
    <property type="match status" value="1"/>
</dbReference>
<dbReference type="PROSITE" id="PS50891">
    <property type="entry name" value="LOB"/>
    <property type="match status" value="1"/>
</dbReference>
<name>LBD4_ARATH</name>
<protein>
    <recommendedName>
        <fullName>LOB domain-containing protein 4</fullName>
    </recommendedName>
    <alternativeName>
        <fullName>ASYMMETRIC LEAVES 2-like protein 6</fullName>
        <shortName>AS2-like protein 6</shortName>
    </alternativeName>
</protein>
<reference key="1">
    <citation type="journal article" date="2009" name="Plant J.">
        <title>Characterization of genes in the ASYMMETRIC LEAVES2/LATERAL ORGAN BOUNDARIES (AS2/LOB) family in Arabidopsis thaliana, and functional and molecular comparisons between AS2 and other family members.</title>
        <authorList>
            <person name="Matsumura Y."/>
            <person name="Iwakawa H."/>
            <person name="Machida Y."/>
            <person name="Machida C."/>
        </authorList>
    </citation>
    <scope>NUCLEOTIDE SEQUENCE [MRNA]</scope>
    <source>
        <strain>cv. Columbia</strain>
    </source>
</reference>
<reference key="2">
    <citation type="journal article" date="2000" name="Nature">
        <title>Sequence and analysis of chromosome 1 of the plant Arabidopsis thaliana.</title>
        <authorList>
            <person name="Theologis A."/>
            <person name="Ecker J.R."/>
            <person name="Palm C.J."/>
            <person name="Federspiel N.A."/>
            <person name="Kaul S."/>
            <person name="White O."/>
            <person name="Alonso J."/>
            <person name="Altafi H."/>
            <person name="Araujo R."/>
            <person name="Bowman C.L."/>
            <person name="Brooks S.Y."/>
            <person name="Buehler E."/>
            <person name="Chan A."/>
            <person name="Chao Q."/>
            <person name="Chen H."/>
            <person name="Cheuk R.F."/>
            <person name="Chin C.W."/>
            <person name="Chung M.K."/>
            <person name="Conn L."/>
            <person name="Conway A.B."/>
            <person name="Conway A.R."/>
            <person name="Creasy T.H."/>
            <person name="Dewar K."/>
            <person name="Dunn P."/>
            <person name="Etgu P."/>
            <person name="Feldblyum T.V."/>
            <person name="Feng J.-D."/>
            <person name="Fong B."/>
            <person name="Fujii C.Y."/>
            <person name="Gill J.E."/>
            <person name="Goldsmith A.D."/>
            <person name="Haas B."/>
            <person name="Hansen N.F."/>
            <person name="Hughes B."/>
            <person name="Huizar L."/>
            <person name="Hunter J.L."/>
            <person name="Jenkins J."/>
            <person name="Johnson-Hopson C."/>
            <person name="Khan S."/>
            <person name="Khaykin E."/>
            <person name="Kim C.J."/>
            <person name="Koo H.L."/>
            <person name="Kremenetskaia I."/>
            <person name="Kurtz D.B."/>
            <person name="Kwan A."/>
            <person name="Lam B."/>
            <person name="Langin-Hooper S."/>
            <person name="Lee A."/>
            <person name="Lee J.M."/>
            <person name="Lenz C.A."/>
            <person name="Li J.H."/>
            <person name="Li Y.-P."/>
            <person name="Lin X."/>
            <person name="Liu S.X."/>
            <person name="Liu Z.A."/>
            <person name="Luros J.S."/>
            <person name="Maiti R."/>
            <person name="Marziali A."/>
            <person name="Militscher J."/>
            <person name="Miranda M."/>
            <person name="Nguyen M."/>
            <person name="Nierman W.C."/>
            <person name="Osborne B.I."/>
            <person name="Pai G."/>
            <person name="Peterson J."/>
            <person name="Pham P.K."/>
            <person name="Rizzo M."/>
            <person name="Rooney T."/>
            <person name="Rowley D."/>
            <person name="Sakano H."/>
            <person name="Salzberg S.L."/>
            <person name="Schwartz J.R."/>
            <person name="Shinn P."/>
            <person name="Southwick A.M."/>
            <person name="Sun H."/>
            <person name="Tallon L.J."/>
            <person name="Tambunga G."/>
            <person name="Toriumi M.J."/>
            <person name="Town C.D."/>
            <person name="Utterback T."/>
            <person name="Van Aken S."/>
            <person name="Vaysberg M."/>
            <person name="Vysotskaia V.S."/>
            <person name="Walker M."/>
            <person name="Wu D."/>
            <person name="Yu G."/>
            <person name="Fraser C.M."/>
            <person name="Venter J.C."/>
            <person name="Davis R.W."/>
        </authorList>
    </citation>
    <scope>NUCLEOTIDE SEQUENCE [LARGE SCALE GENOMIC DNA]</scope>
    <source>
        <strain>cv. Columbia</strain>
    </source>
</reference>
<reference key="3">
    <citation type="journal article" date="2017" name="Plant J.">
        <title>Araport11: a complete reannotation of the Arabidopsis thaliana reference genome.</title>
        <authorList>
            <person name="Cheng C.Y."/>
            <person name="Krishnakumar V."/>
            <person name="Chan A.P."/>
            <person name="Thibaud-Nissen F."/>
            <person name="Schobel S."/>
            <person name="Town C.D."/>
        </authorList>
    </citation>
    <scope>GENOME REANNOTATION</scope>
    <source>
        <strain>cv. Columbia</strain>
    </source>
</reference>
<reference key="4">
    <citation type="submission" date="2004-09" db="EMBL/GenBank/DDBJ databases">
        <title>Arabidopsis ORF clones.</title>
        <authorList>
            <person name="Cheuk R.F."/>
            <person name="Chen H."/>
            <person name="Kim C.J."/>
            <person name="Shinn P."/>
            <person name="Ecker J.R."/>
        </authorList>
    </citation>
    <scope>NUCLEOTIDE SEQUENCE [LARGE SCALE MRNA]</scope>
    <source>
        <strain>cv. Columbia</strain>
    </source>
</reference>
<reference key="5">
    <citation type="journal article" date="2002" name="Plant Physiol.">
        <title>The LATERAL ORGAN BOUNDARIES gene defines a novel, plant-specific gene family.</title>
        <authorList>
            <person name="Shuai B."/>
            <person name="Reynaga-Pena C.G."/>
            <person name="Springer P.S."/>
        </authorList>
    </citation>
    <scope>TISSUE SPECIFICITY</scope>
    <scope>GENE FAMILY</scope>
    <scope>NOMENCLATURE</scope>
</reference>
<reference key="6">
    <citation type="journal article" date="2002" name="Plant Cell Physiol.">
        <title>The ASYMMETRIC LEAVES2 gene of Arabidopsis thaliana, required for formation of a symmetric flat leaf lamina, encodes a member of a novel family of proteins characterized by cysteine repeats and a leucine zipper.</title>
        <authorList>
            <person name="Iwakawa H."/>
            <person name="Ueno Y."/>
            <person name="Semiarti E."/>
            <person name="Onouchi H."/>
            <person name="Kojima S."/>
            <person name="Tsukaya H."/>
            <person name="Hasebe M."/>
            <person name="Soma T."/>
            <person name="Ikezaki M."/>
            <person name="Machida C."/>
            <person name="Machida Y."/>
        </authorList>
    </citation>
    <scope>GENE FAMILY</scope>
    <scope>NOMENCLATURE</scope>
</reference>
<keyword id="KW-1185">Reference proteome</keyword>
<comment type="interaction">
    <interactant intactId="EBI-4445715">
        <id>Q9SHE9</id>
    </interactant>
    <interactant intactId="EBI-4446727">
        <id>Q94ID6</id>
        <label>ERF12</label>
    </interactant>
    <organismsDiffer>false</organismsDiffer>
    <experiments>3</experiments>
</comment>
<comment type="interaction">
    <interactant intactId="EBI-4445715">
        <id>Q9SHE9</id>
    </interactant>
    <interactant intactId="EBI-4432427">
        <id>Q9AT61</id>
        <label>LBD13</label>
    </interactant>
    <organismsDiffer>false</organismsDiffer>
    <experiments>4</experiments>
</comment>
<comment type="interaction">
    <interactant intactId="EBI-4445715">
        <id>Q9SHE9</id>
    </interactant>
    <interactant intactId="EBI-15193845">
        <id>P59467</id>
        <label>LBD23</label>
    </interactant>
    <organismsDiffer>false</organismsDiffer>
    <experiments>3</experiments>
</comment>
<comment type="interaction">
    <interactant intactId="EBI-4445715">
        <id>Q9SHE9</id>
    </interactant>
    <interactant intactId="EBI-15201724">
        <id>O81323</id>
        <label>LBD30</label>
    </interactant>
    <organismsDiffer>false</organismsDiffer>
    <experiments>3</experiments>
</comment>
<comment type="interaction">
    <interactant intactId="EBI-4445715">
        <id>Q9SHE9</id>
    </interactant>
    <interactant intactId="EBI-15194891">
        <id>Q9FML4</id>
        <label>LOB</label>
    </interactant>
    <organismsDiffer>false</organismsDiffer>
    <experiments>3</experiments>
</comment>
<comment type="tissue specificity">
    <text evidence="3">Expressed in young shoots, roots, stems, leaves and flowers.</text>
</comment>
<comment type="similarity">
    <text evidence="4">Belongs to the LOB domain-containing protein family.</text>
</comment>
<feature type="chain" id="PRO_0000132255" description="LOB domain-containing protein 4">
    <location>
        <begin position="1"/>
        <end position="172"/>
    </location>
</feature>
<feature type="domain" description="LOB" evidence="1">
    <location>
        <begin position="12"/>
        <end position="113"/>
    </location>
</feature>
<feature type="region of interest" description="Disordered" evidence="2">
    <location>
        <begin position="125"/>
        <end position="152"/>
    </location>
</feature>
<feature type="compositionally biased region" description="Low complexity" evidence="2">
    <location>
        <begin position="131"/>
        <end position="147"/>
    </location>
</feature>
<accession>Q9SHE9</accession>
<accession>B7XG60</accession>
<accession>Q6DBF5</accession>
<gene>
    <name type="primary">LBD4</name>
    <name type="synonym">ASL6</name>
    <name type="ordered locus">At1g31320</name>
    <name type="ORF">T19E23.11</name>
</gene>
<organism>
    <name type="scientific">Arabidopsis thaliana</name>
    <name type="common">Mouse-ear cress</name>
    <dbReference type="NCBI Taxonomy" id="3702"/>
    <lineage>
        <taxon>Eukaryota</taxon>
        <taxon>Viridiplantae</taxon>
        <taxon>Streptophyta</taxon>
        <taxon>Embryophyta</taxon>
        <taxon>Tracheophyta</taxon>
        <taxon>Spermatophyta</taxon>
        <taxon>Magnoliopsida</taxon>
        <taxon>eudicotyledons</taxon>
        <taxon>Gunneridae</taxon>
        <taxon>Pentapetalae</taxon>
        <taxon>rosids</taxon>
        <taxon>malvids</taxon>
        <taxon>Brassicales</taxon>
        <taxon>Brassicaceae</taxon>
        <taxon>Camelineae</taxon>
        <taxon>Arabidopsis</taxon>
    </lineage>
</organism>
<evidence type="ECO:0000255" key="1">
    <source>
        <dbReference type="PROSITE-ProRule" id="PRU00291"/>
    </source>
</evidence>
<evidence type="ECO:0000256" key="2">
    <source>
        <dbReference type="SAM" id="MobiDB-lite"/>
    </source>
</evidence>
<evidence type="ECO:0000269" key="3">
    <source>
    </source>
</evidence>
<evidence type="ECO:0000305" key="4"/>
<sequence length="172" mass="18697">MKESSRKQGAASPCAACKLLRRRCAQDCVFSPYFPADEPQKFANVHRVFGASNVNKMLQELPIHQRGDAVSSMVYEANARVRDPVYGCVGAISSLQQQIDVLQAQLALAQAEVVHLRVRQSTNFPGHGLCPDSPSSSGSPSSKQVSPQDNKGMFSHMDIVDEASLGESMWSC</sequence>